<protein>
    <recommendedName>
        <fullName>CDK5RAP1-like protein</fullName>
    </recommendedName>
</protein>
<dbReference type="EMBL" id="AC137744">
    <property type="status" value="NOT_ANNOTATED_CDS"/>
    <property type="molecule type" value="Genomic_DNA"/>
</dbReference>
<dbReference type="EMBL" id="DP000010">
    <property type="protein sequence ID" value="ABA94563.1"/>
    <property type="molecule type" value="Genomic_DNA"/>
</dbReference>
<dbReference type="EMBL" id="AP008217">
    <property type="protein sequence ID" value="BAF28559.1"/>
    <property type="molecule type" value="Genomic_DNA"/>
</dbReference>
<dbReference type="EMBL" id="AP014967">
    <property type="protein sequence ID" value="BAT14692.1"/>
    <property type="molecule type" value="Genomic_DNA"/>
</dbReference>
<dbReference type="EMBL" id="CM000148">
    <property type="protein sequence ID" value="EEE52386.1"/>
    <property type="molecule type" value="Genomic_DNA"/>
</dbReference>
<dbReference type="EMBL" id="AK066319">
    <property type="protein sequence ID" value="BAG89909.1"/>
    <property type="molecule type" value="mRNA"/>
</dbReference>
<dbReference type="RefSeq" id="XP_015615154.1">
    <property type="nucleotide sequence ID" value="XM_015759668.1"/>
</dbReference>
<dbReference type="SMR" id="Q2R1U4"/>
<dbReference type="BioGRID" id="819866">
    <property type="interactions" value="1"/>
</dbReference>
<dbReference type="FunCoup" id="Q2R1U4">
    <property type="interactions" value="1782"/>
</dbReference>
<dbReference type="STRING" id="39947.Q2R1U4"/>
<dbReference type="PaxDb" id="39947-Q2R1U4"/>
<dbReference type="EnsemblPlants" id="Os11t0592800-01">
    <property type="protein sequence ID" value="Os11t0592800-01"/>
    <property type="gene ID" value="Os11g0592800"/>
</dbReference>
<dbReference type="Gramene" id="Os11t0592800-01">
    <property type="protein sequence ID" value="Os11t0592800-01"/>
    <property type="gene ID" value="Os11g0592800"/>
</dbReference>
<dbReference type="KEGG" id="dosa:Os11g0592800"/>
<dbReference type="eggNOG" id="KOG2492">
    <property type="taxonomic scope" value="Eukaryota"/>
</dbReference>
<dbReference type="HOGENOM" id="CLU_018697_2_1_1"/>
<dbReference type="InParanoid" id="Q2R1U4"/>
<dbReference type="OMA" id="CKNIHLP"/>
<dbReference type="OrthoDB" id="190098at2759"/>
<dbReference type="Proteomes" id="UP000000763">
    <property type="component" value="Chromosome 11"/>
</dbReference>
<dbReference type="Proteomes" id="UP000007752">
    <property type="component" value="Chromosome 11"/>
</dbReference>
<dbReference type="Proteomes" id="UP000059680">
    <property type="component" value="Chromosome 11"/>
</dbReference>
<dbReference type="GO" id="GO:0005829">
    <property type="term" value="C:cytosol"/>
    <property type="evidence" value="ECO:0000318"/>
    <property type="project" value="GO_Central"/>
</dbReference>
<dbReference type="GO" id="GO:0005739">
    <property type="term" value="C:mitochondrion"/>
    <property type="evidence" value="ECO:0000318"/>
    <property type="project" value="GO_Central"/>
</dbReference>
<dbReference type="GO" id="GO:0051539">
    <property type="term" value="F:4 iron, 4 sulfur cluster binding"/>
    <property type="evidence" value="ECO:0007669"/>
    <property type="project" value="UniProtKB-KW"/>
</dbReference>
<dbReference type="GO" id="GO:0046872">
    <property type="term" value="F:metal ion binding"/>
    <property type="evidence" value="ECO:0007669"/>
    <property type="project" value="UniProtKB-KW"/>
</dbReference>
<dbReference type="GO" id="GO:0035597">
    <property type="term" value="F:N6-isopentenyladenosine methylthiotransferase activity"/>
    <property type="evidence" value="ECO:0000318"/>
    <property type="project" value="GO_Central"/>
</dbReference>
<dbReference type="GO" id="GO:0070900">
    <property type="term" value="P:mitochondrial tRNA modification"/>
    <property type="evidence" value="ECO:0000318"/>
    <property type="project" value="GO_Central"/>
</dbReference>
<dbReference type="CDD" id="cd01335">
    <property type="entry name" value="Radical_SAM"/>
    <property type="match status" value="1"/>
</dbReference>
<dbReference type="FunFam" id="3.40.50.12160:FF:000003">
    <property type="entry name" value="CDK5 regulatory subunit-associated protein 1"/>
    <property type="match status" value="1"/>
</dbReference>
<dbReference type="FunFam" id="3.80.30.20:FF:000003">
    <property type="entry name" value="CDK5 regulatory subunit-associated protein 1"/>
    <property type="match status" value="1"/>
</dbReference>
<dbReference type="Gene3D" id="3.40.50.12160">
    <property type="entry name" value="Methylthiotransferase, N-terminal domain"/>
    <property type="match status" value="1"/>
</dbReference>
<dbReference type="Gene3D" id="3.80.30.20">
    <property type="entry name" value="tm_1862 like domain"/>
    <property type="match status" value="1"/>
</dbReference>
<dbReference type="InterPro" id="IPR006638">
    <property type="entry name" value="Elp3/MiaA/NifB-like_rSAM"/>
</dbReference>
<dbReference type="InterPro" id="IPR005839">
    <property type="entry name" value="Methylthiotransferase"/>
</dbReference>
<dbReference type="InterPro" id="IPR020612">
    <property type="entry name" value="Methylthiotransferase_CS"/>
</dbReference>
<dbReference type="InterPro" id="IPR013848">
    <property type="entry name" value="Methylthiotransferase_N"/>
</dbReference>
<dbReference type="InterPro" id="IPR038135">
    <property type="entry name" value="Methylthiotransferase_N_sf"/>
</dbReference>
<dbReference type="InterPro" id="IPR006463">
    <property type="entry name" value="MiaB_methiolase"/>
</dbReference>
<dbReference type="InterPro" id="IPR007197">
    <property type="entry name" value="rSAM"/>
</dbReference>
<dbReference type="InterPro" id="IPR023404">
    <property type="entry name" value="rSAM_horseshoe"/>
</dbReference>
<dbReference type="InterPro" id="IPR002792">
    <property type="entry name" value="TRAM_dom"/>
</dbReference>
<dbReference type="NCBIfam" id="TIGR01574">
    <property type="entry name" value="miaB-methiolase"/>
    <property type="match status" value="1"/>
</dbReference>
<dbReference type="NCBIfam" id="TIGR00089">
    <property type="entry name" value="MiaB/RimO family radical SAM methylthiotransferase"/>
    <property type="match status" value="1"/>
</dbReference>
<dbReference type="PANTHER" id="PTHR43020">
    <property type="entry name" value="CDK5 REGULATORY SUBUNIT-ASSOCIATED PROTEIN 1"/>
    <property type="match status" value="1"/>
</dbReference>
<dbReference type="PANTHER" id="PTHR43020:SF2">
    <property type="entry name" value="MITOCHONDRIAL TRNA METHYLTHIOTRANSFERASE CDK5RAP1"/>
    <property type="match status" value="1"/>
</dbReference>
<dbReference type="Pfam" id="PF04055">
    <property type="entry name" value="Radical_SAM"/>
    <property type="match status" value="1"/>
</dbReference>
<dbReference type="Pfam" id="PF01938">
    <property type="entry name" value="TRAM"/>
    <property type="match status" value="1"/>
</dbReference>
<dbReference type="Pfam" id="PF00919">
    <property type="entry name" value="UPF0004"/>
    <property type="match status" value="1"/>
</dbReference>
<dbReference type="SFLD" id="SFLDF00273">
    <property type="entry name" value="(dimethylallyl)adenosine_tRNA"/>
    <property type="match status" value="1"/>
</dbReference>
<dbReference type="SFLD" id="SFLDG01082">
    <property type="entry name" value="B12-binding_domain_containing"/>
    <property type="match status" value="1"/>
</dbReference>
<dbReference type="SFLD" id="SFLDF00413">
    <property type="entry name" value="CDK5RAP1"/>
    <property type="match status" value="1"/>
</dbReference>
<dbReference type="SFLD" id="SFLDS00029">
    <property type="entry name" value="Radical_SAM"/>
    <property type="match status" value="1"/>
</dbReference>
<dbReference type="SMART" id="SM00729">
    <property type="entry name" value="Elp3"/>
    <property type="match status" value="1"/>
</dbReference>
<dbReference type="SUPFAM" id="SSF102114">
    <property type="entry name" value="Radical SAM enzymes"/>
    <property type="match status" value="1"/>
</dbReference>
<dbReference type="PROSITE" id="PS51449">
    <property type="entry name" value="MTTASE_N"/>
    <property type="match status" value="1"/>
</dbReference>
<dbReference type="PROSITE" id="PS01278">
    <property type="entry name" value="MTTASE_RADICAL"/>
    <property type="match status" value="1"/>
</dbReference>
<dbReference type="PROSITE" id="PS51918">
    <property type="entry name" value="RADICAL_SAM"/>
    <property type="match status" value="1"/>
</dbReference>
<dbReference type="PROSITE" id="PS50926">
    <property type="entry name" value="TRAM"/>
    <property type="match status" value="1"/>
</dbReference>
<organism>
    <name type="scientific">Oryza sativa subsp. japonica</name>
    <name type="common">Rice</name>
    <dbReference type="NCBI Taxonomy" id="39947"/>
    <lineage>
        <taxon>Eukaryota</taxon>
        <taxon>Viridiplantae</taxon>
        <taxon>Streptophyta</taxon>
        <taxon>Embryophyta</taxon>
        <taxon>Tracheophyta</taxon>
        <taxon>Spermatophyta</taxon>
        <taxon>Magnoliopsida</taxon>
        <taxon>Liliopsida</taxon>
        <taxon>Poales</taxon>
        <taxon>Poaceae</taxon>
        <taxon>BOP clade</taxon>
        <taxon>Oryzoideae</taxon>
        <taxon>Oryzeae</taxon>
        <taxon>Oryzinae</taxon>
        <taxon>Oryza</taxon>
        <taxon>Oryza sativa</taxon>
    </lineage>
</organism>
<feature type="chain" id="PRO_0000247313" description="CDK5RAP1-like protein">
    <location>
        <begin position="1"/>
        <end position="600"/>
    </location>
</feature>
<feature type="domain" description="MTTase N-terminal" evidence="3">
    <location>
        <begin position="93"/>
        <end position="222"/>
    </location>
</feature>
<feature type="domain" description="Radical SAM core" evidence="4">
    <location>
        <begin position="246"/>
        <end position="501"/>
    </location>
</feature>
<feature type="domain" description="TRAM" evidence="2">
    <location>
        <begin position="504"/>
        <end position="580"/>
    </location>
</feature>
<feature type="region of interest" description="Disordered" evidence="5">
    <location>
        <begin position="45"/>
        <end position="66"/>
    </location>
</feature>
<feature type="binding site" evidence="3">
    <location>
        <position position="102"/>
    </location>
    <ligand>
        <name>[4Fe-4S] cluster</name>
        <dbReference type="ChEBI" id="CHEBI:49883"/>
        <label>1</label>
    </ligand>
</feature>
<feature type="binding site" evidence="3">
    <location>
        <position position="139"/>
    </location>
    <ligand>
        <name>[4Fe-4S] cluster</name>
        <dbReference type="ChEBI" id="CHEBI:49883"/>
        <label>1</label>
    </ligand>
</feature>
<feature type="binding site" evidence="3">
    <location>
        <position position="185"/>
    </location>
    <ligand>
        <name>[4Fe-4S] cluster</name>
        <dbReference type="ChEBI" id="CHEBI:49883"/>
        <label>1</label>
    </ligand>
</feature>
<feature type="binding site" evidence="3">
    <location>
        <position position="260"/>
    </location>
    <ligand>
        <name>[4Fe-4S] cluster</name>
        <dbReference type="ChEBI" id="CHEBI:49883"/>
        <label>2</label>
        <note>4Fe-4S-S-AdoMet</note>
    </ligand>
</feature>
<feature type="binding site" evidence="3">
    <location>
        <position position="264"/>
    </location>
    <ligand>
        <name>[4Fe-4S] cluster</name>
        <dbReference type="ChEBI" id="CHEBI:49883"/>
        <label>2</label>
        <note>4Fe-4S-S-AdoMet</note>
    </ligand>
</feature>
<feature type="binding site" evidence="3">
    <location>
        <position position="267"/>
    </location>
    <ligand>
        <name>[4Fe-4S] cluster</name>
        <dbReference type="ChEBI" id="CHEBI:49883"/>
        <label>2</label>
        <note>4Fe-4S-S-AdoMet</note>
    </ligand>
</feature>
<keyword id="KW-0004">4Fe-4S</keyword>
<keyword id="KW-0408">Iron</keyword>
<keyword id="KW-0411">Iron-sulfur</keyword>
<keyword id="KW-0479">Metal-binding</keyword>
<keyword id="KW-1185">Reference proteome</keyword>
<keyword id="KW-0949">S-adenosyl-L-methionine</keyword>
<name>CK5P1_ORYSJ</name>
<accession>Q2R1U4</accession>
<accession>Q0IRV6</accession>
<comment type="function">
    <text evidence="1">Potential regulator of CDK5 activity.</text>
</comment>
<comment type="cofactor">
    <cofactor evidence="3">
        <name>[4Fe-4S] cluster</name>
        <dbReference type="ChEBI" id="CHEBI:49883"/>
    </cofactor>
    <text evidence="3">Binds 2 [4Fe-4S] clusters. One cluster is coordinated with 3 cysteines and an exchangeable S-adenosyl-L-methionine.</text>
</comment>
<comment type="similarity">
    <text evidence="6">Belongs to the methylthiotransferase family. MiaB subfamily.</text>
</comment>
<proteinExistence type="evidence at transcript level"/>
<reference key="1">
    <citation type="journal article" date="2005" name="BMC Biol.">
        <title>The sequence of rice chromosomes 11 and 12, rich in disease resistance genes and recent gene duplications.</title>
        <authorList>
            <consortium name="The rice chromosomes 11 and 12 sequencing consortia"/>
        </authorList>
    </citation>
    <scope>NUCLEOTIDE SEQUENCE [LARGE SCALE GENOMIC DNA]</scope>
    <source>
        <strain>cv. Nipponbare</strain>
    </source>
</reference>
<reference key="2">
    <citation type="journal article" date="2005" name="Nature">
        <title>The map-based sequence of the rice genome.</title>
        <authorList>
            <consortium name="International rice genome sequencing project (IRGSP)"/>
        </authorList>
    </citation>
    <scope>NUCLEOTIDE SEQUENCE [LARGE SCALE GENOMIC DNA]</scope>
    <source>
        <strain>cv. Nipponbare</strain>
    </source>
</reference>
<reference key="3">
    <citation type="journal article" date="2008" name="Nucleic Acids Res.">
        <title>The rice annotation project database (RAP-DB): 2008 update.</title>
        <authorList>
            <consortium name="The rice annotation project (RAP)"/>
        </authorList>
    </citation>
    <scope>GENOME REANNOTATION</scope>
    <source>
        <strain>cv. Nipponbare</strain>
    </source>
</reference>
<reference key="4">
    <citation type="journal article" date="2013" name="Rice">
        <title>Improvement of the Oryza sativa Nipponbare reference genome using next generation sequence and optical map data.</title>
        <authorList>
            <person name="Kawahara Y."/>
            <person name="de la Bastide M."/>
            <person name="Hamilton J.P."/>
            <person name="Kanamori H."/>
            <person name="McCombie W.R."/>
            <person name="Ouyang S."/>
            <person name="Schwartz D.C."/>
            <person name="Tanaka T."/>
            <person name="Wu J."/>
            <person name="Zhou S."/>
            <person name="Childs K.L."/>
            <person name="Davidson R.M."/>
            <person name="Lin H."/>
            <person name="Quesada-Ocampo L."/>
            <person name="Vaillancourt B."/>
            <person name="Sakai H."/>
            <person name="Lee S.S."/>
            <person name="Kim J."/>
            <person name="Numa H."/>
            <person name="Itoh T."/>
            <person name="Buell C.R."/>
            <person name="Matsumoto T."/>
        </authorList>
    </citation>
    <scope>GENOME REANNOTATION</scope>
    <source>
        <strain>cv. Nipponbare</strain>
    </source>
</reference>
<reference key="5">
    <citation type="journal article" date="2005" name="PLoS Biol.">
        <title>The genomes of Oryza sativa: a history of duplications.</title>
        <authorList>
            <person name="Yu J."/>
            <person name="Wang J."/>
            <person name="Lin W."/>
            <person name="Li S."/>
            <person name="Li H."/>
            <person name="Zhou J."/>
            <person name="Ni P."/>
            <person name="Dong W."/>
            <person name="Hu S."/>
            <person name="Zeng C."/>
            <person name="Zhang J."/>
            <person name="Zhang Y."/>
            <person name="Li R."/>
            <person name="Xu Z."/>
            <person name="Li S."/>
            <person name="Li X."/>
            <person name="Zheng H."/>
            <person name="Cong L."/>
            <person name="Lin L."/>
            <person name="Yin J."/>
            <person name="Geng J."/>
            <person name="Li G."/>
            <person name="Shi J."/>
            <person name="Liu J."/>
            <person name="Lv H."/>
            <person name="Li J."/>
            <person name="Wang J."/>
            <person name="Deng Y."/>
            <person name="Ran L."/>
            <person name="Shi X."/>
            <person name="Wang X."/>
            <person name="Wu Q."/>
            <person name="Li C."/>
            <person name="Ren X."/>
            <person name="Wang J."/>
            <person name="Wang X."/>
            <person name="Li D."/>
            <person name="Liu D."/>
            <person name="Zhang X."/>
            <person name="Ji Z."/>
            <person name="Zhao W."/>
            <person name="Sun Y."/>
            <person name="Zhang Z."/>
            <person name="Bao J."/>
            <person name="Han Y."/>
            <person name="Dong L."/>
            <person name="Ji J."/>
            <person name="Chen P."/>
            <person name="Wu S."/>
            <person name="Liu J."/>
            <person name="Xiao Y."/>
            <person name="Bu D."/>
            <person name="Tan J."/>
            <person name="Yang L."/>
            <person name="Ye C."/>
            <person name="Zhang J."/>
            <person name="Xu J."/>
            <person name="Zhou Y."/>
            <person name="Yu Y."/>
            <person name="Zhang B."/>
            <person name="Zhuang S."/>
            <person name="Wei H."/>
            <person name="Liu B."/>
            <person name="Lei M."/>
            <person name="Yu H."/>
            <person name="Li Y."/>
            <person name="Xu H."/>
            <person name="Wei S."/>
            <person name="He X."/>
            <person name="Fang L."/>
            <person name="Zhang Z."/>
            <person name="Zhang Y."/>
            <person name="Huang X."/>
            <person name="Su Z."/>
            <person name="Tong W."/>
            <person name="Li J."/>
            <person name="Tong Z."/>
            <person name="Li S."/>
            <person name="Ye J."/>
            <person name="Wang L."/>
            <person name="Fang L."/>
            <person name="Lei T."/>
            <person name="Chen C.-S."/>
            <person name="Chen H.-C."/>
            <person name="Xu Z."/>
            <person name="Li H."/>
            <person name="Huang H."/>
            <person name="Zhang F."/>
            <person name="Xu H."/>
            <person name="Li N."/>
            <person name="Zhao C."/>
            <person name="Li S."/>
            <person name="Dong L."/>
            <person name="Huang Y."/>
            <person name="Li L."/>
            <person name="Xi Y."/>
            <person name="Qi Q."/>
            <person name="Li W."/>
            <person name="Zhang B."/>
            <person name="Hu W."/>
            <person name="Zhang Y."/>
            <person name="Tian X."/>
            <person name="Jiao Y."/>
            <person name="Liang X."/>
            <person name="Jin J."/>
            <person name="Gao L."/>
            <person name="Zheng W."/>
            <person name="Hao B."/>
            <person name="Liu S.-M."/>
            <person name="Wang W."/>
            <person name="Yuan L."/>
            <person name="Cao M."/>
            <person name="McDermott J."/>
            <person name="Samudrala R."/>
            <person name="Wang J."/>
            <person name="Wong G.K.-S."/>
            <person name="Yang H."/>
        </authorList>
    </citation>
    <scope>NUCLEOTIDE SEQUENCE [LARGE SCALE GENOMIC DNA]</scope>
    <source>
        <strain>cv. Nipponbare</strain>
    </source>
</reference>
<reference key="6">
    <citation type="journal article" date="2003" name="Science">
        <title>Collection, mapping, and annotation of over 28,000 cDNA clones from japonica rice.</title>
        <authorList>
            <consortium name="The rice full-length cDNA consortium"/>
        </authorList>
    </citation>
    <scope>NUCLEOTIDE SEQUENCE [LARGE SCALE MRNA]</scope>
    <source>
        <strain>cv. Nipponbare</strain>
    </source>
</reference>
<gene>
    <name type="ordered locus">Os11g0592800</name>
    <name type="ordered locus">LOC_Os11g38030</name>
    <name evidence="7" type="ORF">OsJ_34478</name>
    <name type="ORF">OSJNBa0074L11</name>
</gene>
<sequence length="600" mass="67106">MAAPLTAAAALRLGRGLSHRRAFLLRRRYSPAPLAPSPCAAPRCLSSAAHPPPPPPRRLARSGPSRPLAASAATAVSEAQTDLESGPVTASKGRIYHETYGCQMNVNDMEIVLSIMKNEGYDEIVPDPESAEIIFINTCAIRDNAEQKVWQRLNYFWFLKRQWKANVAAGRSRSLRPPKIAVLGCMAERLKEKILDSDKMVDVVCGPDAYRDLPRLLQEVDYGQKGINTLLSLEETYADITPVRISDNSVTAFVSIMRGCNNMCSFCIVPFTRGRERSRPVSSIVREVGELWKAGVKEVMLLGQNVNSYNDTSEVEELEPGKNWELSEGFSSMCKVKNMGLRFADLLDQLSLEYPEMRFRFTSPHPKDYPDELLYLMRDRHNVCKLIHMPAQSGSSAVLERMRRGYTREAYLELVQKIRSIIPDVGLSSDFISGFCGETEEEHAETLTLVRAVGYDMAYMFAYSMREKTHAHRNYVDDVPDDVKQRRLAELISTFRETTAKIYDSQVGTVQLVLVEGPNKRAPETEMIGKTDRGHRVSFASVPVPHTFEGDELRKPVVGDFIEVKITKSSTASLSGDVIARTSLSKFYKNHSSEAHAVAA</sequence>
<evidence type="ECO:0000250" key="1"/>
<evidence type="ECO:0000255" key="2">
    <source>
        <dbReference type="PROSITE-ProRule" id="PRU00208"/>
    </source>
</evidence>
<evidence type="ECO:0000255" key="3">
    <source>
        <dbReference type="PROSITE-ProRule" id="PRU00780"/>
    </source>
</evidence>
<evidence type="ECO:0000255" key="4">
    <source>
        <dbReference type="PROSITE-ProRule" id="PRU01266"/>
    </source>
</evidence>
<evidence type="ECO:0000256" key="5">
    <source>
        <dbReference type="SAM" id="MobiDB-lite"/>
    </source>
</evidence>
<evidence type="ECO:0000305" key="6"/>
<evidence type="ECO:0000312" key="7">
    <source>
        <dbReference type="EMBL" id="EEE52386.1"/>
    </source>
</evidence>